<feature type="chain" id="PRO_0000315234" description="Autophagy-related protein 2 homolog A">
    <location>
        <begin position="1"/>
        <end position="1938"/>
    </location>
</feature>
<feature type="domain" description="Chorein N-terminal" evidence="4">
    <location>
        <begin position="14"/>
        <end position="111"/>
    </location>
</feature>
<feature type="region of interest" description="Disordered" evidence="5">
    <location>
        <begin position="1242"/>
        <end position="1272"/>
    </location>
</feature>
<feature type="region of interest" description="Disordered" evidence="5">
    <location>
        <begin position="1315"/>
        <end position="1359"/>
    </location>
</feature>
<feature type="region of interest" description="WIPI-interacting" evidence="12">
    <location>
        <begin position="1358"/>
        <end position="1404"/>
    </location>
</feature>
<feature type="region of interest" description="Disordered" evidence="5">
    <location>
        <begin position="1438"/>
        <end position="1476"/>
    </location>
</feature>
<feature type="region of interest" description="Disordered" evidence="5">
    <location>
        <begin position="1614"/>
        <end position="1657"/>
    </location>
</feature>
<feature type="compositionally biased region" description="Acidic residues" evidence="5">
    <location>
        <begin position="1343"/>
        <end position="1359"/>
    </location>
</feature>
<feature type="compositionally biased region" description="Low complexity" evidence="5">
    <location>
        <begin position="1446"/>
        <end position="1464"/>
    </location>
</feature>
<feature type="modified residue" description="Phosphoserine" evidence="25">
    <location>
        <position position="765"/>
    </location>
</feature>
<feature type="modified residue" description="Phosphoserine" evidence="2">
    <location>
        <position position="878"/>
    </location>
</feature>
<feature type="modified residue" description="Phosphoserine" evidence="2">
    <location>
        <position position="892"/>
    </location>
</feature>
<feature type="modified residue" description="Phosphoserine" evidence="2">
    <location>
        <position position="894"/>
    </location>
</feature>
<feature type="modified residue" description="Phosphoserine" evidence="2">
    <location>
        <position position="1266"/>
    </location>
</feature>
<feature type="modified residue" description="Phosphoserine" evidence="24">
    <location>
        <position position="1301"/>
    </location>
</feature>
<feature type="modified residue" description="Phosphoserine" evidence="24">
    <location>
        <position position="1309"/>
    </location>
</feature>
<feature type="modified residue" description="Phosphoserine" evidence="24">
    <location>
        <position position="1402"/>
    </location>
</feature>
<feature type="splice variant" id="VSP_030510" description="In isoform 3." evidence="18">
    <location>
        <begin position="1"/>
        <end position="1607"/>
    </location>
</feature>
<feature type="splice variant" id="VSP_030511" description="In isoform 4." evidence="17">
    <original>SVNEVLESMESPLELVEGFVGSIEVAVPWAALLTDHCTVRVSGLQLTLQPRRGPAPGAADSQSW</original>
    <variation>VRSQARVQEVCERGAGVNGVTAGAGGRLRGLHRGGRALGCSAHRPLHSARVRPPAHLAAPPGSR</variation>
    <location>
        <begin position="58"/>
        <end position="121"/>
    </location>
</feature>
<feature type="splice variant" id="VSP_030512" description="In isoform 4." evidence="17">
    <location>
        <begin position="122"/>
        <end position="1938"/>
    </location>
</feature>
<feature type="splice variant" id="VSP_030515" description="In isoform 2." evidence="18">
    <original>K</original>
    <variation>KVQ</variation>
    <location>
        <position position="1259"/>
    </location>
</feature>
<feature type="splice variant" id="VSP_030516" description="In isoform 3." evidence="18">
    <original>INPVVPGETSAEARPETRAQPSSPLEGQAEGVETTGSQEAPGGGHSPSPPDQQPIYFREFRFTSEVPIWLDYHGKHVTMDQVGTFAGLLIGLAQLNCSELKLKRLCCRHGLLGVDKV</original>
    <variation>MAVAMVKLCERAGLPLLAAPLLRSLLPRAPQPGPAQPRSVQGQRCPARHPPGNLVCERGAGVNGVTAGAGGRLRGLHRGGRALGCSAHRPLHSARVRPPAHLAAPPGSSARGCRLTE</variation>
    <location>
        <begin position="1608"/>
        <end position="1724"/>
    </location>
</feature>
<feature type="sequence variant" id="VAR_038158" description="In dbSNP:rs12293826.">
    <original>V</original>
    <variation>I</variation>
    <location>
        <position position="175"/>
    </location>
</feature>
<feature type="sequence variant" id="VAR_061027" description="In dbSNP:rs35115827.">
    <original>R</original>
    <variation>C</variation>
    <location>
        <position position="394"/>
    </location>
</feature>
<feature type="sequence variant" id="VAR_061028" description="In dbSNP:rs60711419.">
    <original>A</original>
    <variation>V</variation>
    <location>
        <position position="404"/>
    </location>
</feature>
<feature type="sequence variant" id="VAR_038159" description="In dbSNP:rs2285347.">
    <original>A</original>
    <variation>V</variation>
    <location>
        <position position="627"/>
    </location>
</feature>
<feature type="sequence variant" id="VAR_061029" description="In dbSNP:rs656195." evidence="6 16">
    <original>P</original>
    <variation>R</variation>
    <location>
        <position position="656"/>
    </location>
</feature>
<feature type="sequence variant" id="VAR_038160" description="In dbSNP:rs11827140.">
    <original>G</original>
    <variation>R</variation>
    <location>
        <position position="948"/>
    </location>
</feature>
<feature type="mutagenesis site" description="In Mutant 1; abolished lipid transfer activity; when associated with R-82, E-101, R-167, E-171, R-193, R-200, E-223, R-285, R-304 and R-328." evidence="10">
    <original>L</original>
    <variation>R</variation>
    <location>
        <position position="54"/>
    </location>
</feature>
<feature type="mutagenesis site" description="In Mutant 2; abolished lipid transfer activity; when associated with D-103, K-167, R-171, E-193, K-259, E-285 and R-304." evidence="10">
    <original>I</original>
    <variation>E</variation>
    <location>
        <position position="80"/>
    </location>
</feature>
<feature type="mutagenesis site" description="In Mutant 1; abolished lipid transfer activity; when associated with R-54, E-101, R-167, E-171, R-193, R-200, E-223, R-285, R-304 and R-328." evidence="10">
    <original>V</original>
    <variation>R</variation>
    <location>
        <position position="82"/>
    </location>
</feature>
<feature type="mutagenesis site" description="In Mutant 1; abolished lipid transfer activity; when associated with R-54, R-82, R-167, E-171, R-193, R-200, E-223, R-285, R-304 and R-328." evidence="10">
    <original>L</original>
    <variation>E</variation>
    <location>
        <position position="101"/>
    </location>
</feature>
<feature type="mutagenesis site" description="In Mutant 2; abolished lipid transfer activity; when associated with E-80,K-167, R-171, E-193, K-259, E-285 and R-304." evidence="10">
    <original>L</original>
    <variation>D</variation>
    <location>
        <position position="103"/>
    </location>
</feature>
<feature type="mutagenesis site" description="In Mutant 2; abolished lipid transfer activity; when associated with E-80, D-103, R-171, E-193, K-259, E-285 and R-304." evidence="10">
    <original>I</original>
    <variation>K</variation>
    <location>
        <position position="167"/>
    </location>
</feature>
<feature type="mutagenesis site" description="In Mutant 1; abolished lipid transfer activity; when associated with R-54, R-82, E-101, E-171, R-193, R-200, E-223, R-285, R-304 and R-328." evidence="10">
    <original>I</original>
    <variation>R</variation>
    <location>
        <position position="167"/>
    </location>
</feature>
<feature type="mutagenesis site" description="In Mutant 1; abolished lipid transfer activity; when associated with R-54, R-82, E-101, R-167, R-193, R-200, E-223, R-285, R-304 and R-328." evidence="10">
    <original>F</original>
    <variation>E</variation>
    <location>
        <position position="171"/>
    </location>
</feature>
<feature type="mutagenesis site" description="In Mutant 2; abolished lipid transfer activity; when associated with E-80, D-103, K-167, E-193, K-259, E-285 and R-304." evidence="10">
    <original>F</original>
    <variation>R</variation>
    <location>
        <position position="171"/>
    </location>
</feature>
<feature type="mutagenesis site" description="In Mutant 2; abolished lipid transfer activity; when associated with E-80, D-103, K-167, R-171, K-259, E-285 and R-304." evidence="10">
    <original>V</original>
    <variation>E</variation>
    <location>
        <position position="193"/>
    </location>
</feature>
<feature type="mutagenesis site" description="In Mutant 1; abolished lipid transfer activity; when associated with R-54, R-82, E-101, R-167, E-171, R-200, E-223, R-285, R-304 and R-328." evidence="10">
    <original>V</original>
    <variation>R</variation>
    <location>
        <position position="193"/>
    </location>
</feature>
<feature type="mutagenesis site" description="In Mutant 1; abolished lipid transfer activity; when associated with R-54, R-82, E-101, R-167, E-171, R-193, E-223, R-285, R-304 and R-328." evidence="10">
    <original>Y</original>
    <variation>R</variation>
    <location>
        <position position="200"/>
    </location>
</feature>
<feature type="mutagenesis site" description="In Mutant 1; abolished lipid transfer activity; when associated with R-54, R-82, E-101, R-167, E-171, R-193, R-200, R-285, R-304 and R-328." evidence="10">
    <original>L</original>
    <variation>E</variation>
    <location>
        <position position="223"/>
    </location>
</feature>
<feature type="mutagenesis site" description="In Mutant 2; abolished lipid transfer activity; when associated with E-80, D-103, K-167, R-171, E-193, E-285 and R-304." evidence="10">
    <original>M</original>
    <variation>K</variation>
    <location>
        <position position="259"/>
    </location>
</feature>
<feature type="mutagenesis site" description="In Mutant 2; abolished lipid transfer activity; when associated with E-80, D-103, K-167, R-171, E-193, K-259 and R-304." evidence="10">
    <original>L</original>
    <variation>E</variation>
    <location>
        <position position="285"/>
    </location>
</feature>
<feature type="mutagenesis site" description="In Mutant 1; abolished lipid transfer activity; when associated with R-54, R-82, E-101, R-167, E-171, R-193, R-200, E-223, R-304 and R-328." evidence="10">
    <original>L</original>
    <variation>R</variation>
    <location>
        <position position="285"/>
    </location>
</feature>
<feature type="mutagenesis site" description="In Mutant 1; abolished lipid transfer activity; when associated with R-54, R-82, E-101, R-167, E-171, R-193, R-200, E-223, R-285 and R-328. In Mutant 2; abolished lipid transfer activity; when associated with E-80, D-103, K-167, R-171, E-193, K-259 and E-285." evidence="10">
    <original>V</original>
    <variation>R</variation>
    <location>
        <position position="304"/>
    </location>
</feature>
<feature type="mutagenesis site" description="In Mutant 1; abolished lipid transfer activity; when associated with R-54, R-82, E-101, R-167, E-171, R-193, R-200, E-223, R-285 and R-304." evidence="10">
    <original>W</original>
    <variation>R</variation>
    <location>
        <position position="328"/>
    </location>
</feature>
<feature type="mutagenesis site" description="Decreased interaction with WDR45/WIPI4 and ability to promote autophagy." evidence="12">
    <original>V</original>
    <variation>Q</variation>
    <location>
        <position position="1381"/>
    </location>
</feature>
<feature type="mutagenesis site" description="Decreased interaction with WDR45/WIPI4 and ability to promote autophagy." evidence="12">
    <original>T</original>
    <variation>Q</variation>
    <location>
        <position position="1382"/>
    </location>
</feature>
<feature type="mutagenesis site" description="Decreased interaction with WDR45/WIPI4 and ability to promote autophagy." evidence="12">
    <original>I</original>
    <variation>Q</variation>
    <location>
        <position position="1389"/>
    </location>
</feature>
<feature type="mutagenesis site" description="Decreased interaction with WDR45/WIPI4 and ability to promote autophagy." evidence="12">
    <original>Y</original>
    <variation>A</variation>
    <location>
        <position position="1395"/>
    </location>
</feature>
<feature type="mutagenesis site" description="Decreased interaction with WDR45/WIPI4 and ability to promote autophagy." evidence="12">
    <original>F</original>
    <variation>A</variation>
    <location>
        <position position="1396"/>
    </location>
</feature>
<feature type="sequence conflict" description="In Ref. 4; AAI10651." evidence="21" ref="4">
    <original>A</original>
    <variation>S</variation>
    <location>
        <position position="1286"/>
    </location>
</feature>
<feature type="strand" evidence="27">
    <location>
        <begin position="187"/>
        <end position="189"/>
    </location>
</feature>
<feature type="turn" evidence="27">
    <location>
        <begin position="239"/>
        <end position="243"/>
    </location>
</feature>
<feature type="turn" evidence="27">
    <location>
        <begin position="291"/>
        <end position="293"/>
    </location>
</feature>
<feature type="helix" evidence="27">
    <location>
        <begin position="294"/>
        <end position="303"/>
    </location>
</feature>
<feature type="helix" evidence="27">
    <location>
        <begin position="452"/>
        <end position="462"/>
    </location>
</feature>
<feature type="turn" evidence="27">
    <location>
        <begin position="566"/>
        <end position="568"/>
    </location>
</feature>
<feature type="helix" evidence="27">
    <location>
        <begin position="601"/>
        <end position="608"/>
    </location>
</feature>
<feature type="strand" evidence="27">
    <location>
        <begin position="632"/>
        <end position="634"/>
    </location>
</feature>
<feature type="strand" evidence="27">
    <location>
        <begin position="664"/>
        <end position="666"/>
    </location>
</feature>
<feature type="strand" evidence="27">
    <location>
        <begin position="679"/>
        <end position="682"/>
    </location>
</feature>
<feature type="strand" evidence="27">
    <location>
        <begin position="684"/>
        <end position="687"/>
    </location>
</feature>
<feature type="strand" evidence="27">
    <location>
        <begin position="692"/>
        <end position="695"/>
    </location>
</feature>
<feature type="strand" evidence="27">
    <location>
        <begin position="726"/>
        <end position="728"/>
    </location>
</feature>
<feature type="strand" evidence="27">
    <location>
        <begin position="738"/>
        <end position="740"/>
    </location>
</feature>
<feature type="helix" evidence="27">
    <location>
        <begin position="797"/>
        <end position="806"/>
    </location>
</feature>
<feature type="strand" evidence="27">
    <location>
        <begin position="817"/>
        <end position="819"/>
    </location>
</feature>
<feature type="turn" evidence="27">
    <location>
        <begin position="829"/>
        <end position="831"/>
    </location>
</feature>
<feature type="helix" evidence="27">
    <location>
        <begin position="832"/>
        <end position="837"/>
    </location>
</feature>
<feature type="turn" evidence="27">
    <location>
        <begin position="838"/>
        <end position="842"/>
    </location>
</feature>
<feature type="strand" evidence="27">
    <location>
        <begin position="932"/>
        <end position="935"/>
    </location>
</feature>
<feature type="strand" evidence="27">
    <location>
        <begin position="962"/>
        <end position="968"/>
    </location>
</feature>
<feature type="helix" evidence="27">
    <location>
        <begin position="973"/>
        <end position="975"/>
    </location>
</feature>
<feature type="strand" evidence="27">
    <location>
        <begin position="979"/>
        <end position="981"/>
    </location>
</feature>
<feature type="strand" evidence="27">
    <location>
        <begin position="984"/>
        <end position="986"/>
    </location>
</feature>
<feature type="strand" evidence="27">
    <location>
        <begin position="1051"/>
        <end position="1053"/>
    </location>
</feature>
<feature type="turn" evidence="27">
    <location>
        <begin position="1056"/>
        <end position="1059"/>
    </location>
</feature>
<feature type="strand" evidence="27">
    <location>
        <begin position="1079"/>
        <end position="1082"/>
    </location>
</feature>
<feature type="helix" evidence="27">
    <location>
        <begin position="1083"/>
        <end position="1091"/>
    </location>
</feature>
<feature type="strand" evidence="27">
    <location>
        <begin position="1115"/>
        <end position="1117"/>
    </location>
</feature>
<feature type="strand" evidence="27">
    <location>
        <begin position="1137"/>
        <end position="1139"/>
    </location>
</feature>
<feature type="strand" evidence="27">
    <location>
        <begin position="1147"/>
        <end position="1157"/>
    </location>
</feature>
<feature type="strand" evidence="27">
    <location>
        <begin position="1169"/>
        <end position="1171"/>
    </location>
</feature>
<feature type="strand" evidence="27">
    <location>
        <begin position="1182"/>
        <end position="1187"/>
    </location>
</feature>
<feature type="strand" evidence="27">
    <location>
        <begin position="1190"/>
        <end position="1196"/>
    </location>
</feature>
<feature type="helix" evidence="27">
    <location>
        <begin position="1224"/>
        <end position="1236"/>
    </location>
</feature>
<feature type="strand" evidence="26">
    <location>
        <begin position="1380"/>
        <end position="1383"/>
    </location>
</feature>
<feature type="strand" evidence="27">
    <location>
        <begin position="1425"/>
        <end position="1427"/>
    </location>
</feature>
<feature type="strand" evidence="27">
    <location>
        <begin position="1484"/>
        <end position="1489"/>
    </location>
</feature>
<feature type="turn" evidence="27">
    <location>
        <begin position="1515"/>
        <end position="1517"/>
    </location>
</feature>
<feature type="strand" evidence="27">
    <location>
        <begin position="1523"/>
        <end position="1525"/>
    </location>
</feature>
<feature type="helix" evidence="27">
    <location>
        <begin position="1596"/>
        <end position="1607"/>
    </location>
</feature>
<feature type="helix" evidence="27">
    <location>
        <begin position="1692"/>
        <end position="1699"/>
    </location>
</feature>
<feature type="helix" evidence="27">
    <location>
        <begin position="1723"/>
        <end position="1727"/>
    </location>
</feature>
<protein>
    <recommendedName>
        <fullName evidence="19">Autophagy-related protein 2 homolog A</fullName>
    </recommendedName>
</protein>
<evidence type="ECO:0000250" key="1">
    <source>
        <dbReference type="UniProtKB" id="P53855"/>
    </source>
</evidence>
<evidence type="ECO:0000250" key="2">
    <source>
        <dbReference type="UniProtKB" id="Q6P4T0"/>
    </source>
</evidence>
<evidence type="ECO:0000250" key="3">
    <source>
        <dbReference type="UniProtKB" id="Q96BY7"/>
    </source>
</evidence>
<evidence type="ECO:0000255" key="4"/>
<evidence type="ECO:0000256" key="5">
    <source>
        <dbReference type="SAM" id="MobiDB-lite"/>
    </source>
</evidence>
<evidence type="ECO:0000269" key="6">
    <source>
    </source>
</evidence>
<evidence type="ECO:0000269" key="7">
    <source>
    </source>
</evidence>
<evidence type="ECO:0000269" key="8">
    <source>
    </source>
</evidence>
<evidence type="ECO:0000269" key="9">
    <source>
    </source>
</evidence>
<evidence type="ECO:0000269" key="10">
    <source>
    </source>
</evidence>
<evidence type="ECO:0000269" key="11">
    <source>
    </source>
</evidence>
<evidence type="ECO:0000269" key="12">
    <source>
    </source>
</evidence>
<evidence type="ECO:0000269" key="13">
    <source>
    </source>
</evidence>
<evidence type="ECO:0000269" key="14">
    <source>
    </source>
</evidence>
<evidence type="ECO:0000269" key="15">
    <source>
    </source>
</evidence>
<evidence type="ECO:0000269" key="16">
    <source>
    </source>
</evidence>
<evidence type="ECO:0000303" key="17">
    <source>
    </source>
</evidence>
<evidence type="ECO:0000303" key="18">
    <source>
    </source>
</evidence>
<evidence type="ECO:0000303" key="19">
    <source>
    </source>
</evidence>
<evidence type="ECO:0000303" key="20">
    <source>
    </source>
</evidence>
<evidence type="ECO:0000305" key="21"/>
<evidence type="ECO:0000312" key="22">
    <source>
        <dbReference type="HGNC" id="HGNC:29028"/>
    </source>
</evidence>
<evidence type="ECO:0007744" key="23">
    <source>
        <dbReference type="PDB" id="6KLR"/>
    </source>
</evidence>
<evidence type="ECO:0007744" key="24">
    <source>
    </source>
</evidence>
<evidence type="ECO:0007744" key="25">
    <source>
    </source>
</evidence>
<evidence type="ECO:0007829" key="26">
    <source>
        <dbReference type="PDB" id="6KLR"/>
    </source>
</evidence>
<evidence type="ECO:0007829" key="27">
    <source>
        <dbReference type="PDB" id="8KBX"/>
    </source>
</evidence>
<sequence>MSRWLWPWSNCVKERVCRYLLHHYLGHFFQEHLSLDQLSLDLYKGSVALRDIHLEIWSVNEVLESMESPLELVEGFVGSIEVAVPWAALLTDHCTVRVSGLQLTLQPRRGPAPGAADSQSWASCMTTSLQLAQECLRDGLPEPSEPPQPLEGLEMFAQTIETVLRRIKVTFLDTVVRVEHSPGDGERGVAVEVRVQRLEYCDEAVRDPSQAPPVDVHQPPAFLHKLLQLAGVRLHYEELPAQEEPPEPPLQIGSCSGYMELMVKLKQNEAFPGPKLEVAGQLGSLHLLLTPRQLQQLQELLSAVSLTDHEGLADKLNKSRPLGAEDLWLIEQDLNQQLQAGAVAEPLSPDPLTNPLLNLDNTDLFFSMAGLTSSVASALSELSLSDVDLASSVRSDMASRRLSAQAHPAGKMAPNPLLDTMRPDSLLKMTLGGVTLTLLQTSAPSSGPPDLATHFFTEFDATKDGPFGSRDFHHLRPRFQRACPCSHVRLTGTAVQLSWELRTGSRGRRTTSMEVHFGQLEVLECLWPRGTSEPEYTEILTFPGTLGSQASARPCAHLRHTQILRRVPKSRPRRSVACHCHSELALDLANFQADVELGALDRLAALLRLATVPAEPPAGLLTEPLPAMEQQTVFRLSAPRATLRLRFPIADLRPEPDPWAGQAVRAEQLRLELSEPQFRSELSSGPGPPVPTHLELTCSDLHGIYEDGGKPPVPCLRVSKALDPKSTGRKYFLPQVVVTVNPQSSSTQWEVAPEKGEELELSVESPCELREPEPSPFSSKRTMYETEEMVIPGDPEEMRTFQSRTLALSRCSLEVILPSVHIFLPSKEVYESIYNRINNDLLMWEPADLLPTPDPAAQPSGFPGPSGFWHDSFKMCKSAFKLANCFDLTPDSDSDDEDAHFFSVGASGGPQAAAPEAPSLHLQSTFSTLVTVLKGRITALCETKDEGGKRLEAVHGELVLDMEHGTLFSVSQYCGQPGLGYFCLEAEKATLYHRAAVDDYPLPSHLDLPSFAPPAQLAPTIYPSEEGVTERGASGRKGQGRGPHMLSTAVRIHLDPHKNVKEFLVTLRLHKATLRHYMALPEQSWHSQLLEFLDVLDDPVLGYLPPTVITILHTHLFSCSVDYRPLYLPVRVLITAETFTLSSNIIMDTSTFLLRFILDDSALYLSDKCEVETLDLRRDYVCVLDVDLLELVIKTWKGSTEGKLSQPLFELRCSNNVVHVHSCADSCALLVNLLQYVMSTGDLHPPPRPPSPTEIAGQKLSESPASLPSCPPVETALINQRDLADALLDTERSLRELAQPSGGHLPQASPISVYLFPGERSGAPPPSPPVGGPAGSLGSCSEEKEDEREEEGDGDTLDSDEFCILDAPGLGIPPRDGEPVVTQLHPGPIVVRDGYFSRPIGSTDLLRAPAHFPVPSTRVVLREVSLVWHLYGGRDFGPHPGHRARTGLSGPRSSPSRCSGPNRPQNSWRTQGGSGRQHHVLMEIQLSKVSFQHEVYPAEPATGPAAPSQELEERPLSRQVFIVQELEVRDRLASSQINKFLYLHTSERMPRRAHSNMLTIKALHVAPTTNLGGPECCLRVSLMPLRLNVDQDALFFLKDFFTSLVAGINPVVPGETSAEARPETRAQPSSPLEGQAEGVETTGSQEAPGGGHSPSPPDQQPIYFREFRFTSEVPIWLDYHGKHVTMDQVGTFAGLLIGLAQLNCSELKLKRLCCRHGLLGVDKVLGYALNEWLQDIRKNQLPGLLGGVGPMHSVVQLFQGFRDLLWLPIEQYRKDGRLMRGLQRGAASFGSSTASAALELSNRLVQAIQATAETVYDILSPAAPVSRSLQDKRSARRLRRGQQPADLREGVAKAYDTVREGILDTAQTICDVASRGHEQKGLTGAVGGVIRQLPPTVVKPLILATEATSSLLGGMRNQIVPDAHKDHALKWRSDSAQD</sequence>
<organism>
    <name type="scientific">Homo sapiens</name>
    <name type="common">Human</name>
    <dbReference type="NCBI Taxonomy" id="9606"/>
    <lineage>
        <taxon>Eukaryota</taxon>
        <taxon>Metazoa</taxon>
        <taxon>Chordata</taxon>
        <taxon>Craniata</taxon>
        <taxon>Vertebrata</taxon>
        <taxon>Euteleostomi</taxon>
        <taxon>Mammalia</taxon>
        <taxon>Eutheria</taxon>
        <taxon>Euarchontoglires</taxon>
        <taxon>Primates</taxon>
        <taxon>Haplorrhini</taxon>
        <taxon>Catarrhini</taxon>
        <taxon>Hominidae</taxon>
        <taxon>Homo</taxon>
    </lineage>
</organism>
<gene>
    <name evidence="19 22" type="primary">ATG2A</name>
    <name evidence="20" type="synonym">KIAA0404</name>
</gene>
<proteinExistence type="evidence at protein level"/>
<reference key="1">
    <citation type="journal article" date="1997" name="DNA Res.">
        <title>Prediction of the coding sequences of unidentified human genes. VIII. 78 new cDNA clones from brain which code for large proteins in vitro.</title>
        <authorList>
            <person name="Ishikawa K."/>
            <person name="Nagase T."/>
            <person name="Nakajima D."/>
            <person name="Seki N."/>
            <person name="Ohira M."/>
            <person name="Miyajima N."/>
            <person name="Tanaka A."/>
            <person name="Kotani H."/>
            <person name="Nomura N."/>
            <person name="Ohara O."/>
        </authorList>
    </citation>
    <scope>NUCLEOTIDE SEQUENCE [LARGE SCALE MRNA] (ISOFORM 1)</scope>
    <scope>VARIANT ARG-656</scope>
    <source>
        <tissue>Brain</tissue>
    </source>
</reference>
<reference key="2">
    <citation type="journal article" date="2004" name="Nat. Genet.">
        <title>Complete sequencing and characterization of 21,243 full-length human cDNAs.</title>
        <authorList>
            <person name="Ota T."/>
            <person name="Suzuki Y."/>
            <person name="Nishikawa T."/>
            <person name="Otsuki T."/>
            <person name="Sugiyama T."/>
            <person name="Irie R."/>
            <person name="Wakamatsu A."/>
            <person name="Hayashi K."/>
            <person name="Sato H."/>
            <person name="Nagai K."/>
            <person name="Kimura K."/>
            <person name="Makita H."/>
            <person name="Sekine M."/>
            <person name="Obayashi M."/>
            <person name="Nishi T."/>
            <person name="Shibahara T."/>
            <person name="Tanaka T."/>
            <person name="Ishii S."/>
            <person name="Yamamoto J."/>
            <person name="Saito K."/>
            <person name="Kawai Y."/>
            <person name="Isono Y."/>
            <person name="Nakamura Y."/>
            <person name="Nagahari K."/>
            <person name="Murakami K."/>
            <person name="Yasuda T."/>
            <person name="Iwayanagi T."/>
            <person name="Wagatsuma M."/>
            <person name="Shiratori A."/>
            <person name="Sudo H."/>
            <person name="Hosoiri T."/>
            <person name="Kaku Y."/>
            <person name="Kodaira H."/>
            <person name="Kondo H."/>
            <person name="Sugawara M."/>
            <person name="Takahashi M."/>
            <person name="Kanda K."/>
            <person name="Yokoi T."/>
            <person name="Furuya T."/>
            <person name="Kikkawa E."/>
            <person name="Omura Y."/>
            <person name="Abe K."/>
            <person name="Kamihara K."/>
            <person name="Katsuta N."/>
            <person name="Sato K."/>
            <person name="Tanikawa M."/>
            <person name="Yamazaki M."/>
            <person name="Ninomiya K."/>
            <person name="Ishibashi T."/>
            <person name="Yamashita H."/>
            <person name="Murakawa K."/>
            <person name="Fujimori K."/>
            <person name="Tanai H."/>
            <person name="Kimata M."/>
            <person name="Watanabe M."/>
            <person name="Hiraoka S."/>
            <person name="Chiba Y."/>
            <person name="Ishida S."/>
            <person name="Ono Y."/>
            <person name="Takiguchi S."/>
            <person name="Watanabe S."/>
            <person name="Yosida M."/>
            <person name="Hotuta T."/>
            <person name="Kusano J."/>
            <person name="Kanehori K."/>
            <person name="Takahashi-Fujii A."/>
            <person name="Hara H."/>
            <person name="Tanase T.-O."/>
            <person name="Nomura Y."/>
            <person name="Togiya S."/>
            <person name="Komai F."/>
            <person name="Hara R."/>
            <person name="Takeuchi K."/>
            <person name="Arita M."/>
            <person name="Imose N."/>
            <person name="Musashino K."/>
            <person name="Yuuki H."/>
            <person name="Oshima A."/>
            <person name="Sasaki N."/>
            <person name="Aotsuka S."/>
            <person name="Yoshikawa Y."/>
            <person name="Matsunawa H."/>
            <person name="Ichihara T."/>
            <person name="Shiohata N."/>
            <person name="Sano S."/>
            <person name="Moriya S."/>
            <person name="Momiyama H."/>
            <person name="Satoh N."/>
            <person name="Takami S."/>
            <person name="Terashima Y."/>
            <person name="Suzuki O."/>
            <person name="Nakagawa S."/>
            <person name="Senoh A."/>
            <person name="Mizoguchi H."/>
            <person name="Goto Y."/>
            <person name="Shimizu F."/>
            <person name="Wakebe H."/>
            <person name="Hishigaki H."/>
            <person name="Watanabe T."/>
            <person name="Sugiyama A."/>
            <person name="Takemoto M."/>
            <person name="Kawakami B."/>
            <person name="Yamazaki M."/>
            <person name="Watanabe K."/>
            <person name="Kumagai A."/>
            <person name="Itakura S."/>
            <person name="Fukuzumi Y."/>
            <person name="Fujimori Y."/>
            <person name="Komiyama M."/>
            <person name="Tashiro H."/>
            <person name="Tanigami A."/>
            <person name="Fujiwara T."/>
            <person name="Ono T."/>
            <person name="Yamada K."/>
            <person name="Fujii Y."/>
            <person name="Ozaki K."/>
            <person name="Hirao M."/>
            <person name="Ohmori Y."/>
            <person name="Kawabata A."/>
            <person name="Hikiji T."/>
            <person name="Kobatake N."/>
            <person name="Inagaki H."/>
            <person name="Ikema Y."/>
            <person name="Okamoto S."/>
            <person name="Okitani R."/>
            <person name="Kawakami T."/>
            <person name="Noguchi S."/>
            <person name="Itoh T."/>
            <person name="Shigeta K."/>
            <person name="Senba T."/>
            <person name="Matsumura K."/>
            <person name="Nakajima Y."/>
            <person name="Mizuno T."/>
            <person name="Morinaga M."/>
            <person name="Sasaki M."/>
            <person name="Togashi T."/>
            <person name="Oyama M."/>
            <person name="Hata H."/>
            <person name="Watanabe M."/>
            <person name="Komatsu T."/>
            <person name="Mizushima-Sugano J."/>
            <person name="Satoh T."/>
            <person name="Shirai Y."/>
            <person name="Takahashi Y."/>
            <person name="Nakagawa K."/>
            <person name="Okumura K."/>
            <person name="Nagase T."/>
            <person name="Nomura N."/>
            <person name="Kikuchi H."/>
            <person name="Masuho Y."/>
            <person name="Yamashita R."/>
            <person name="Nakai K."/>
            <person name="Yada T."/>
            <person name="Nakamura Y."/>
            <person name="Ohara O."/>
            <person name="Isogai T."/>
            <person name="Sugano S."/>
        </authorList>
    </citation>
    <scope>NUCLEOTIDE SEQUENCE [LARGE SCALE MRNA] (ISOFORM 4)</scope>
    <source>
        <tissue>Thymus</tissue>
    </source>
</reference>
<reference key="3">
    <citation type="journal article" date="2006" name="Nature">
        <title>Human chromosome 11 DNA sequence and analysis including novel gene identification.</title>
        <authorList>
            <person name="Taylor T.D."/>
            <person name="Noguchi H."/>
            <person name="Totoki Y."/>
            <person name="Toyoda A."/>
            <person name="Kuroki Y."/>
            <person name="Dewar K."/>
            <person name="Lloyd C."/>
            <person name="Itoh T."/>
            <person name="Takeda T."/>
            <person name="Kim D.-W."/>
            <person name="She X."/>
            <person name="Barlow K.F."/>
            <person name="Bloom T."/>
            <person name="Bruford E."/>
            <person name="Chang J.L."/>
            <person name="Cuomo C.A."/>
            <person name="Eichler E."/>
            <person name="FitzGerald M.G."/>
            <person name="Jaffe D.B."/>
            <person name="LaButti K."/>
            <person name="Nicol R."/>
            <person name="Park H.-S."/>
            <person name="Seaman C."/>
            <person name="Sougnez C."/>
            <person name="Yang X."/>
            <person name="Zimmer A.R."/>
            <person name="Zody M.C."/>
            <person name="Birren B.W."/>
            <person name="Nusbaum C."/>
            <person name="Fujiyama A."/>
            <person name="Hattori M."/>
            <person name="Rogers J."/>
            <person name="Lander E.S."/>
            <person name="Sakaki Y."/>
        </authorList>
    </citation>
    <scope>NUCLEOTIDE SEQUENCE [LARGE SCALE GENOMIC DNA]</scope>
</reference>
<reference key="4">
    <citation type="journal article" date="2004" name="Genome Res.">
        <title>The status, quality, and expansion of the NIH full-length cDNA project: the Mammalian Gene Collection (MGC).</title>
        <authorList>
            <consortium name="The MGC Project Team"/>
        </authorList>
    </citation>
    <scope>NUCLEOTIDE SEQUENCE [LARGE SCALE MRNA] (ISOFORMS 1 AND 3)</scope>
    <scope>NUCLEOTIDE SEQUENCE [LARGE SCALE MRNA] OF 1189-1938 (ISOFORM 2)</scope>
    <scope>VARIANT ARG-656</scope>
    <source>
        <tissue>Cervix</tissue>
        <tissue>Hippocampus</tissue>
        <tissue>Skin</tissue>
    </source>
</reference>
<reference key="5">
    <citation type="journal article" date="2008" name="Proc. Natl. Acad. Sci. U.S.A.">
        <title>A quantitative atlas of mitotic phosphorylation.</title>
        <authorList>
            <person name="Dephoure N."/>
            <person name="Zhou C."/>
            <person name="Villen J."/>
            <person name="Beausoleil S.A."/>
            <person name="Bakalarski C.E."/>
            <person name="Elledge S.J."/>
            <person name="Gygi S.P."/>
        </authorList>
    </citation>
    <scope>IDENTIFICATION BY MASS SPECTROMETRY [LARGE SCALE ANALYSIS]</scope>
    <source>
        <tissue>Cervix carcinoma</tissue>
    </source>
</reference>
<reference key="6">
    <citation type="journal article" date="2011" name="Acta Biochim. Pol.">
        <title>Human hAtg2A protein expressed in yeast is recruited to preautophagosomal structure but does not complement autophagy defects of atg2Delta strain.</title>
        <authorList>
            <person name="Romanyuk D."/>
            <person name="Polak A."/>
            <person name="Maleszewska A."/>
            <person name="Sienko M."/>
            <person name="Grynberg M."/>
            <person name="Zoladek T."/>
        </authorList>
    </citation>
    <scope>SUBCELLULAR LOCATION</scope>
</reference>
<reference key="7">
    <citation type="journal article" date="2012" name="Mol. Biol. Cell">
        <title>Mammalian Atg2 proteins are essential for autophagosome formation and important for regulation of size and distribution of lipid droplets.</title>
        <authorList>
            <person name="Velikkakath A.K."/>
            <person name="Nishimura T."/>
            <person name="Oita E."/>
            <person name="Ishihara N."/>
            <person name="Mizushima N."/>
        </authorList>
    </citation>
    <scope>FUNCTION</scope>
    <scope>SUBCELLULAR LOCATION</scope>
</reference>
<reference key="8">
    <citation type="journal article" date="2013" name="J. Proteome Res.">
        <title>Toward a comprehensive characterization of a human cancer cell phosphoproteome.</title>
        <authorList>
            <person name="Zhou H."/>
            <person name="Di Palma S."/>
            <person name="Preisinger C."/>
            <person name="Peng M."/>
            <person name="Polat A.N."/>
            <person name="Heck A.J."/>
            <person name="Mohammed S."/>
        </authorList>
    </citation>
    <scope>PHOSPHORYLATION [LARGE SCALE ANALYSIS] AT SER-1301; SER-1309 AND SER-1402</scope>
    <scope>IDENTIFICATION BY MASS SPECTROMETRY [LARGE SCALE ANALYSIS]</scope>
    <source>
        <tissue>Erythroleukemia</tissue>
    </source>
</reference>
<reference key="9">
    <citation type="journal article" date="2014" name="J. Proteomics">
        <title>An enzyme assisted RP-RPLC approach for in-depth analysis of human liver phosphoproteome.</title>
        <authorList>
            <person name="Bian Y."/>
            <person name="Song C."/>
            <person name="Cheng K."/>
            <person name="Dong M."/>
            <person name="Wang F."/>
            <person name="Huang J."/>
            <person name="Sun D."/>
            <person name="Wang L."/>
            <person name="Ye M."/>
            <person name="Zou H."/>
        </authorList>
    </citation>
    <scope>PHOSPHORYLATION [LARGE SCALE ANALYSIS] AT SER-765</scope>
    <scope>IDENTIFICATION BY MASS SPECTROMETRY [LARGE SCALE ANALYSIS]</scope>
    <source>
        <tissue>Liver</tissue>
    </source>
</reference>
<reference key="10">
    <citation type="journal article" date="2017" name="Autophagy">
        <title>Architecture of the ATG2B-WDR45 complex and an aromatic Y/HF motif crucial for complex formation.</title>
        <authorList>
            <person name="Zheng J.X."/>
            <person name="Li Y."/>
            <person name="Ding Y.H."/>
            <person name="Liu J.J."/>
            <person name="Zhang M.J."/>
            <person name="Dong M.Q."/>
            <person name="Wang H.W."/>
            <person name="Yu L."/>
        </authorList>
    </citation>
    <scope>INTERACTION WITH WDR45</scope>
</reference>
<reference key="11">
    <citation type="journal article" date="2017" name="Nat. Commun.">
        <title>WIPI3 and WIPI4 beta-propellers are scaffolds for LKB1-AMPK-TSC signalling circuits in the control of autophagy.</title>
        <authorList>
            <person name="Bakula D."/>
            <person name="Mueller A.J."/>
            <person name="Zuleger T."/>
            <person name="Takacs Z."/>
            <person name="Franz-Wachtel M."/>
            <person name="Thost A.K."/>
            <person name="Brigger D."/>
            <person name="Tschan M.P."/>
            <person name="Frickey T."/>
            <person name="Robenek H."/>
            <person name="Macek B."/>
            <person name="Proikas-Cezanne T."/>
        </authorList>
    </citation>
    <scope>FUNCTION</scope>
    <scope>INTERACTION WITH WDR45</scope>
</reference>
<reference key="12">
    <citation type="journal article" date="2019" name="Elife">
        <title>The autophagic membrane tether ATG2A transfers lipids between membranes.</title>
        <authorList>
            <person name="Maeda S."/>
            <person name="Otomo C."/>
            <person name="Otomo T."/>
        </authorList>
    </citation>
    <scope>FUNCTION</scope>
    <scope>CATALYTIC ACTIVITY</scope>
</reference>
<reference key="13">
    <citation type="journal article" date="2019" name="J. Cell Biol.">
        <title>ATG2 transports lipids to promote autophagosome biogenesis.</title>
        <authorList>
            <person name="Valverde D.P."/>
            <person name="Yu S."/>
            <person name="Boggavarapu V."/>
            <person name="Kumar N."/>
            <person name="Lees J.A."/>
            <person name="Walz T."/>
            <person name="Reinisch K.M."/>
            <person name="Melia T.J."/>
        </authorList>
    </citation>
    <scope>FUNCTION</scope>
    <scope>CATALYTIC ACTIVITY</scope>
    <scope>SUBCELLULAR LOCATION</scope>
    <scope>DOMAIN</scope>
    <scope>MUTAGENESIS OF LEU-54; ILE-80; VAL-82; LEU-101; LEU-103; ILE-167; PHE-171; VAL-193; TYR-200; LEU-223; MET-259; LEU-285; VAL-304 AND TRP-328</scope>
</reference>
<reference key="14">
    <citation type="journal article" date="2020" name="Cell Rep.">
        <title>Structure of human ATG9A, the only transmembrane protein of the core autophagy machinery.</title>
        <authorList>
            <person name="Guardia C.M."/>
            <person name="Tan X.F."/>
            <person name="Lian T."/>
            <person name="Rana M.S."/>
            <person name="Zhou W."/>
            <person name="Christenson E.T."/>
            <person name="Lowry A.J."/>
            <person name="Faraldo-Gomez J.D."/>
            <person name="Bonifacino J.S."/>
            <person name="Jiang J."/>
            <person name="Banerjee A."/>
        </authorList>
    </citation>
    <scope>INTERACTION WITH ATG9A</scope>
</reference>
<reference key="15">
    <citation type="journal article" date="2020" name="Nat. Struct. Mol. Biol.">
        <title>Structure, lipid scrambling activity and role in autophagosome formation of ATG9A.</title>
        <authorList>
            <person name="Maeda S."/>
            <person name="Yamamoto H."/>
            <person name="Kinch L.N."/>
            <person name="Garza C.M."/>
            <person name="Takahashi S."/>
            <person name="Otomo C."/>
            <person name="Grishin N.V."/>
            <person name="Forli S."/>
            <person name="Mizushima N."/>
            <person name="Otomo T."/>
        </authorList>
    </citation>
    <scope>INTERACTION WITH ATG9A</scope>
</reference>
<reference key="16">
    <citation type="journal article" date="2021" name="Proc. Natl. Acad. Sci. U.S.A.">
        <title>A model for a partnership of lipid transfer proteins and scramblases in membrane expansion and organelle biogenesis.</title>
        <authorList>
            <person name="Ghanbarpour A."/>
            <person name="Valverde D.P."/>
            <person name="Melia T.J."/>
            <person name="Reinisch K.M."/>
        </authorList>
    </citation>
    <scope>INTERACTION WITH ATG9A; TMEM41B AND VMP1</scope>
</reference>
<reference evidence="23" key="17">
    <citation type="journal article" date="2020" name="Nat. Commun.">
        <title>Multi-site-mediated entwining of the linear WIR-motif around WIPI beta-propellers for autophagy.</title>
        <authorList>
            <person name="Ren J."/>
            <person name="Liang R."/>
            <person name="Wang W."/>
            <person name="Zhang D."/>
            <person name="Yu L."/>
            <person name="Feng W."/>
        </authorList>
    </citation>
    <scope>X-RAY CRYSTALLOGRAPHY (2.21 ANGSTROMS) OF 1374-1404 IN COMPLEX WITH WDR45B</scope>
    <scope>INTERACTION WITH WDR45 AND WDR45B</scope>
    <scope>MUTAGENESIS OF VAL-1381; THR-1382; ILE-1389; TYR-1395 AND PHE-1396</scope>
</reference>
<dbReference type="EMBL" id="AB007864">
    <property type="protein sequence ID" value="BAA23700.1"/>
    <property type="status" value="ALT_INIT"/>
    <property type="molecule type" value="mRNA"/>
</dbReference>
<dbReference type="EMBL" id="AK126181">
    <property type="protein sequence ID" value="BAC86477.1"/>
    <property type="molecule type" value="mRNA"/>
</dbReference>
<dbReference type="EMBL" id="AP001187">
    <property type="status" value="NOT_ANNOTATED_CDS"/>
    <property type="molecule type" value="Genomic_DNA"/>
</dbReference>
<dbReference type="EMBL" id="BC008593">
    <property type="protein sequence ID" value="AAH08593.1"/>
    <property type="molecule type" value="mRNA"/>
</dbReference>
<dbReference type="EMBL" id="BC027481">
    <property type="protein sequence ID" value="AAH27481.1"/>
    <property type="molecule type" value="mRNA"/>
</dbReference>
<dbReference type="EMBL" id="BC053596">
    <property type="protein sequence ID" value="AAH53596.1"/>
    <property type="molecule type" value="mRNA"/>
</dbReference>
<dbReference type="EMBL" id="BC110650">
    <property type="protein sequence ID" value="AAI10651.1"/>
    <property type="molecule type" value="mRNA"/>
</dbReference>
<dbReference type="EMBL" id="BC113091">
    <property type="protein sequence ID" value="AAI13092.1"/>
    <property type="molecule type" value="mRNA"/>
</dbReference>
<dbReference type="CCDS" id="CCDS31602.1">
    <molecule id="Q2TAZ0-1"/>
</dbReference>
<dbReference type="PIR" id="T00051">
    <property type="entry name" value="T00051"/>
</dbReference>
<dbReference type="RefSeq" id="NP_055919.2">
    <molecule id="Q2TAZ0-1"/>
    <property type="nucleotide sequence ID" value="NM_015104.3"/>
</dbReference>
<dbReference type="RefSeq" id="XP_011543165.1">
    <molecule id="Q2TAZ0-3"/>
    <property type="nucleotide sequence ID" value="XM_011544863.3"/>
</dbReference>
<dbReference type="PDB" id="6KLR">
    <property type="method" value="X-ray"/>
    <property type="resolution" value="2.21 A"/>
    <property type="chains" value="A/B=1374-1404"/>
</dbReference>
<dbReference type="PDB" id="8KBX">
    <property type="method" value="EM"/>
    <property type="resolution" value="3.23 A"/>
    <property type="chains" value="B=1-1938"/>
</dbReference>
<dbReference type="PDB" id="8KBY">
    <property type="method" value="EM"/>
    <property type="resolution" value="3.23 A"/>
    <property type="chains" value="B=1-1938"/>
</dbReference>
<dbReference type="PDB" id="8KC3">
    <property type="method" value="EM"/>
    <property type="resolution" value="7.00 A"/>
    <property type="chains" value="E=1-1938"/>
</dbReference>
<dbReference type="PDB" id="8SBK">
    <property type="method" value="X-ray"/>
    <property type="resolution" value="1.80 A"/>
    <property type="chains" value="C=1126-1134"/>
</dbReference>
<dbReference type="PDB" id="8SBL">
    <property type="method" value="X-ray"/>
    <property type="resolution" value="3.00 A"/>
    <property type="chains" value="C/F/I/L=1126-1134"/>
</dbReference>
<dbReference type="PDB" id="8Y1L">
    <property type="method" value="EM"/>
    <property type="resolution" value="7.05 A"/>
    <property type="chains" value="B=1-1938"/>
</dbReference>
<dbReference type="PDBsum" id="6KLR"/>
<dbReference type="PDBsum" id="8KBX"/>
<dbReference type="PDBsum" id="8KBY"/>
<dbReference type="PDBsum" id="8KC3"/>
<dbReference type="PDBsum" id="8SBK"/>
<dbReference type="PDBsum" id="8SBL"/>
<dbReference type="PDBsum" id="8Y1L"/>
<dbReference type="EMDB" id="EMD-15604"/>
<dbReference type="EMDB" id="EMD-15605"/>
<dbReference type="EMDB" id="EMD-37086"/>
<dbReference type="EMDB" id="EMD-37087"/>
<dbReference type="EMDB" id="EMD-37091"/>
<dbReference type="EMDB" id="EMD-38839"/>
<dbReference type="SMR" id="Q2TAZ0"/>
<dbReference type="BioGRID" id="116748">
    <property type="interactions" value="46"/>
</dbReference>
<dbReference type="FunCoup" id="Q2TAZ0">
    <property type="interactions" value="695"/>
</dbReference>
<dbReference type="IntAct" id="Q2TAZ0">
    <property type="interactions" value="106"/>
</dbReference>
<dbReference type="STRING" id="9606.ENSP00000366475"/>
<dbReference type="TCDB" id="9.A.15.2.1">
    <property type="family name" value="the autophagy-related phagophore-formation transporter (apt) family"/>
</dbReference>
<dbReference type="GlyGen" id="Q2TAZ0">
    <property type="glycosylation" value="1 site, 1 O-linked glycan (1 site)"/>
</dbReference>
<dbReference type="iPTMnet" id="Q2TAZ0"/>
<dbReference type="PhosphoSitePlus" id="Q2TAZ0"/>
<dbReference type="BioMuta" id="ATG2A"/>
<dbReference type="DMDM" id="296439433"/>
<dbReference type="jPOST" id="Q2TAZ0"/>
<dbReference type="MassIVE" id="Q2TAZ0"/>
<dbReference type="PaxDb" id="9606-ENSP00000366475"/>
<dbReference type="PeptideAtlas" id="Q2TAZ0"/>
<dbReference type="ProteomicsDB" id="61475">
    <molecule id="Q2TAZ0-1"/>
</dbReference>
<dbReference type="ProteomicsDB" id="61476">
    <molecule id="Q2TAZ0-3"/>
</dbReference>
<dbReference type="ProteomicsDB" id="61477">
    <molecule id="Q2TAZ0-4"/>
</dbReference>
<dbReference type="ProteomicsDB" id="61478">
    <molecule id="Q2TAZ0-5"/>
</dbReference>
<dbReference type="Pumba" id="Q2TAZ0"/>
<dbReference type="Antibodypedia" id="44102">
    <property type="antibodies" value="171 antibodies from 24 providers"/>
</dbReference>
<dbReference type="DNASU" id="23130"/>
<dbReference type="Ensembl" id="ENST00000377264.8">
    <molecule id="Q2TAZ0-1"/>
    <property type="protein sequence ID" value="ENSP00000366475.3"/>
    <property type="gene ID" value="ENSG00000110046.14"/>
</dbReference>
<dbReference type="GeneID" id="23130"/>
<dbReference type="KEGG" id="hsa:23130"/>
<dbReference type="MANE-Select" id="ENST00000377264.8">
    <property type="protein sequence ID" value="ENSP00000366475.3"/>
    <property type="RefSeq nucleotide sequence ID" value="NM_015104.3"/>
    <property type="RefSeq protein sequence ID" value="NP_055919.2"/>
</dbReference>
<dbReference type="UCSC" id="uc001obx.4">
    <molecule id="Q2TAZ0-1"/>
    <property type="organism name" value="human"/>
</dbReference>
<dbReference type="AGR" id="HGNC:29028"/>
<dbReference type="CTD" id="23130"/>
<dbReference type="DisGeNET" id="23130"/>
<dbReference type="GeneCards" id="ATG2A"/>
<dbReference type="HGNC" id="HGNC:29028">
    <property type="gene designation" value="ATG2A"/>
</dbReference>
<dbReference type="HPA" id="ENSG00000110046">
    <property type="expression patterns" value="Low tissue specificity"/>
</dbReference>
<dbReference type="MIM" id="616225">
    <property type="type" value="gene"/>
</dbReference>
<dbReference type="neXtProt" id="NX_Q2TAZ0"/>
<dbReference type="OpenTargets" id="ENSG00000110046"/>
<dbReference type="PharmGKB" id="PA162377101"/>
<dbReference type="VEuPathDB" id="HostDB:ENSG00000110046"/>
<dbReference type="eggNOG" id="KOG2993">
    <property type="taxonomic scope" value="Eukaryota"/>
</dbReference>
<dbReference type="GeneTree" id="ENSGT00620000087966"/>
<dbReference type="HOGENOM" id="CLU_001781_0_0_1"/>
<dbReference type="InParanoid" id="Q2TAZ0"/>
<dbReference type="OMA" id="RPCAQIH"/>
<dbReference type="OrthoDB" id="18982at2759"/>
<dbReference type="PAN-GO" id="Q2TAZ0">
    <property type="GO annotations" value="8 GO annotations based on evolutionary models"/>
</dbReference>
<dbReference type="PhylomeDB" id="Q2TAZ0"/>
<dbReference type="TreeFam" id="TF313482"/>
<dbReference type="PathwayCommons" id="Q2TAZ0"/>
<dbReference type="SignaLink" id="Q2TAZ0"/>
<dbReference type="SIGNOR" id="Q2TAZ0"/>
<dbReference type="BioGRID-ORCS" id="23130">
    <property type="hits" value="41 hits in 1165 CRISPR screens"/>
</dbReference>
<dbReference type="ChiTaRS" id="ATG2A">
    <property type="organism name" value="human"/>
</dbReference>
<dbReference type="GenomeRNAi" id="23130"/>
<dbReference type="Pharos" id="Q2TAZ0">
    <property type="development level" value="Tbio"/>
</dbReference>
<dbReference type="PRO" id="PR:Q2TAZ0"/>
<dbReference type="Proteomes" id="UP000005640">
    <property type="component" value="Chromosome 11"/>
</dbReference>
<dbReference type="RNAct" id="Q2TAZ0">
    <property type="molecule type" value="protein"/>
</dbReference>
<dbReference type="Bgee" id="ENSG00000110046">
    <property type="expression patterns" value="Expressed in right lobe of liver and 192 other cell types or tissues"/>
</dbReference>
<dbReference type="ExpressionAtlas" id="Q2TAZ0">
    <property type="expression patterns" value="baseline and differential"/>
</dbReference>
<dbReference type="GO" id="GO:0005789">
    <property type="term" value="C:endoplasmic reticulum membrane"/>
    <property type="evidence" value="ECO:0007669"/>
    <property type="project" value="UniProtKB-SubCell"/>
</dbReference>
<dbReference type="GO" id="GO:0005811">
    <property type="term" value="C:lipid droplet"/>
    <property type="evidence" value="ECO:0007669"/>
    <property type="project" value="UniProtKB-SubCell"/>
</dbReference>
<dbReference type="GO" id="GO:0044232">
    <property type="term" value="C:organelle membrane contact site"/>
    <property type="evidence" value="ECO:0000314"/>
    <property type="project" value="UniProtKB"/>
</dbReference>
<dbReference type="GO" id="GO:0061908">
    <property type="term" value="C:phagophore"/>
    <property type="evidence" value="ECO:0000318"/>
    <property type="project" value="GO_Central"/>
</dbReference>
<dbReference type="GO" id="GO:0000407">
    <property type="term" value="C:phagophore assembly site"/>
    <property type="evidence" value="ECO:0000318"/>
    <property type="project" value="GO_Central"/>
</dbReference>
<dbReference type="GO" id="GO:0034045">
    <property type="term" value="C:phagophore assembly site membrane"/>
    <property type="evidence" value="ECO:0007669"/>
    <property type="project" value="UniProtKB-SubCell"/>
</dbReference>
<dbReference type="GO" id="GO:0120013">
    <property type="term" value="F:lipid transfer activity"/>
    <property type="evidence" value="ECO:0000314"/>
    <property type="project" value="UniProt"/>
</dbReference>
<dbReference type="GO" id="GO:0032266">
    <property type="term" value="F:phosphatidylinositol-3-phosphate binding"/>
    <property type="evidence" value="ECO:0000318"/>
    <property type="project" value="GO_Central"/>
</dbReference>
<dbReference type="GO" id="GO:0043495">
    <property type="term" value="F:protein-membrane adaptor activity"/>
    <property type="evidence" value="ECO:0000318"/>
    <property type="project" value="GO_Central"/>
</dbReference>
<dbReference type="GO" id="GO:0000045">
    <property type="term" value="P:autophagosome assembly"/>
    <property type="evidence" value="ECO:0000315"/>
    <property type="project" value="UniProt"/>
</dbReference>
<dbReference type="GO" id="GO:0000422">
    <property type="term" value="P:autophagy of mitochondrion"/>
    <property type="evidence" value="ECO:0000318"/>
    <property type="project" value="GO_Central"/>
</dbReference>
<dbReference type="GO" id="GO:0061723">
    <property type="term" value="P:glycophagy"/>
    <property type="evidence" value="ECO:0000318"/>
    <property type="project" value="GO_Central"/>
</dbReference>
<dbReference type="GO" id="GO:0000425">
    <property type="term" value="P:pexophagy"/>
    <property type="evidence" value="ECO:0000318"/>
    <property type="project" value="GO_Central"/>
</dbReference>
<dbReference type="GO" id="GO:0034727">
    <property type="term" value="P:piecemeal microautophagy of the nucleus"/>
    <property type="evidence" value="ECO:0000318"/>
    <property type="project" value="GO_Central"/>
</dbReference>
<dbReference type="GO" id="GO:2000786">
    <property type="term" value="P:positive regulation of autophagosome assembly"/>
    <property type="evidence" value="ECO:0000314"/>
    <property type="project" value="UniProtKB"/>
</dbReference>
<dbReference type="GO" id="GO:0010508">
    <property type="term" value="P:positive regulation of autophagy"/>
    <property type="evidence" value="ECO:0000315"/>
    <property type="project" value="DisProt"/>
</dbReference>
<dbReference type="GO" id="GO:0061709">
    <property type="term" value="P:reticulophagy"/>
    <property type="evidence" value="ECO:0000318"/>
    <property type="project" value="GO_Central"/>
</dbReference>
<dbReference type="DisProt" id="DP02142"/>
<dbReference type="InterPro" id="IPR026849">
    <property type="entry name" value="ATG2"/>
</dbReference>
<dbReference type="PANTHER" id="PTHR13190">
    <property type="entry name" value="AUTOPHAGY-RELATED 2, ISOFORM A"/>
    <property type="match status" value="1"/>
</dbReference>
<dbReference type="PANTHER" id="PTHR13190:SF21">
    <property type="entry name" value="AUTOPHAGY-RELATED PROTEIN 2 HOMOLOG A"/>
    <property type="match status" value="1"/>
</dbReference>
<dbReference type="Pfam" id="PF13329">
    <property type="entry name" value="ATG2_CAD"/>
    <property type="match status" value="3"/>
</dbReference>
<name>ATG2A_HUMAN</name>
<keyword id="KW-0002">3D-structure</keyword>
<keyword id="KW-0025">Alternative splicing</keyword>
<keyword id="KW-0072">Autophagy</keyword>
<keyword id="KW-0256">Endoplasmic reticulum</keyword>
<keyword id="KW-0551">Lipid droplet</keyword>
<keyword id="KW-0445">Lipid transport</keyword>
<keyword id="KW-0472">Membrane</keyword>
<keyword id="KW-0597">Phosphoprotein</keyword>
<keyword id="KW-1267">Proteomics identification</keyword>
<keyword id="KW-1185">Reference proteome</keyword>
<keyword id="KW-0813">Transport</keyword>
<comment type="function">
    <text evidence="7 8 10 11">Lipid transfer protein involved in autophagosome assembly (PubMed:28561066, PubMed:30952800, PubMed:31271352). Tethers the edge of the isolation membrane (IM) to the endoplasmic reticulum (ER) and mediates direct lipid transfer from ER to IM for IM expansion (PubMed:30952800, PubMed:31271352). Binds to the ER exit site (ERES), which is the membrane source for autophagosome formation, and extracts phospholipids from the membrane source and transfers them to ATG9 (ATG9A or ATG9B) to the IM for membrane expansion (PubMed:30952800, PubMed:31271352). Lipid transfer activity is enhanced by WIPI1 and WDR45/WIPI4, which promote ATG2A-association with phosphatidylinositol 3-monophosphate (PI3P)-containing membranes (PubMed:31271352). Also regulates lipid droplets morphology and distribution within the cell (PubMed:22219374, PubMed:28561066).</text>
</comment>
<comment type="catalytic activity">
    <reaction evidence="10">
        <text>a 1,2-diacyl-sn-glycero-3-phospho-L-serine(in) = a 1,2-diacyl-sn-glycero-3-phospho-L-serine(out)</text>
        <dbReference type="Rhea" id="RHEA:38663"/>
        <dbReference type="ChEBI" id="CHEBI:57262"/>
    </reaction>
</comment>
<comment type="catalytic activity">
    <reaction evidence="10 11">
        <text>a 1,2-diacyl-sn-glycero-3-phosphoethanolamine(in) = a 1,2-diacyl-sn-glycero-3-phosphoethanolamine(out)</text>
        <dbReference type="Rhea" id="RHEA:38895"/>
        <dbReference type="ChEBI" id="CHEBI:64612"/>
    </reaction>
</comment>
<comment type="subunit">
    <text evidence="9 12 13 14 15">Interacts with ATG9A (via C-terminus) (PubMed:32610138, PubMed:33106659, PubMed:33850023). Interacts (via WIPI-interacting region) with WDR45B/WIPI3 (PubMed:32483132). Interacts (via WIPI-interacting region) with WDR45/WIPI4 (PubMed:28820312, PubMed:32483132). Interacts with TMEM41B (PubMed:33850023). Interacts with VMP1 (PubMed:33850023).</text>
</comment>
<comment type="interaction">
    <interactant intactId="EBI-2514077">
        <id>Q2TAZ0</id>
    </interactant>
    <interactant intactId="EBI-727146">
        <id>Q7Z3C6</id>
        <label>ATG9A</label>
    </interactant>
    <organismsDiffer>false</organismsDiffer>
    <experiments>4</experiments>
</comment>
<comment type="interaction">
    <interactant intactId="EBI-2514077">
        <id>Q2TAZ0</id>
    </interactant>
    <interactant intactId="EBI-712001">
        <id>O95166</id>
        <label>GABARAP</label>
    </interactant>
    <organismsDiffer>false</organismsDiffer>
    <experiments>2</experiments>
</comment>
<comment type="interaction">
    <interactant intactId="EBI-2514077">
        <id>Q2TAZ0</id>
    </interactant>
    <interactant intactId="EBI-746969">
        <id>Q9H0R8</id>
        <label>GABARAPL1</label>
    </interactant>
    <organismsDiffer>false</organismsDiffer>
    <experiments>3</experiments>
</comment>
<comment type="interaction">
    <interactant intactId="EBI-2514077">
        <id>Q2TAZ0</id>
    </interactant>
    <interactant intactId="EBI-720116">
        <id>P60520</id>
        <label>GABARAPL2</label>
    </interactant>
    <organismsDiffer>false</organismsDiffer>
    <experiments>2</experiments>
</comment>
<comment type="interaction">
    <interactant intactId="EBI-2514077">
        <id>Q2TAZ0</id>
    </interactant>
    <interactant intactId="EBI-373144">
        <id>Q9GZQ8</id>
        <label>MAP1LC3B</label>
    </interactant>
    <organismsDiffer>false</organismsDiffer>
    <experiments>2</experiments>
</comment>
<comment type="interaction">
    <interactant intactId="EBI-2514077">
        <id>Q2TAZ0</id>
    </interactant>
    <interactant intactId="EBI-16439278">
        <id>Q6FHY5</id>
        <label>MEOX2</label>
    </interactant>
    <organismsDiffer>false</organismsDiffer>
    <experiments>3</experiments>
</comment>
<comment type="interaction">
    <interactant intactId="EBI-2514077">
        <id>Q2TAZ0</id>
    </interactant>
    <interactant intactId="EBI-1057581">
        <id>O96008</id>
        <label>TOMM40</label>
    </interactant>
    <organismsDiffer>false</organismsDiffer>
    <experiments>7</experiments>
</comment>
<comment type="interaction">
    <interactant intactId="EBI-2514077">
        <id>Q2TAZ0</id>
    </interactant>
    <interactant intactId="EBI-2682844">
        <id>Q9Y484</id>
        <label>WDR45</label>
    </interactant>
    <organismsDiffer>false</organismsDiffer>
    <experiments>5</experiments>
</comment>
<comment type="subcellular location">
    <subcellularLocation>
        <location evidence="10">Preautophagosomal structure membrane</location>
        <topology evidence="3">Peripheral membrane protein</topology>
    </subcellularLocation>
    <subcellularLocation>
        <location evidence="3">Lipid droplet</location>
    </subcellularLocation>
    <subcellularLocation>
        <location evidence="10">Endoplasmic reticulum membrane</location>
        <topology evidence="1">Peripheral membrane protein</topology>
    </subcellularLocation>
    <text evidence="10">Localizes to endoplasmic reticulum-autophagosome contact sites.</text>
</comment>
<comment type="alternative products">
    <event type="alternative splicing"/>
    <isoform>
        <id>Q2TAZ0-1</id>
        <name>1</name>
        <sequence type="displayed"/>
    </isoform>
    <isoform>
        <id>Q2TAZ0-3</id>
        <name>2</name>
        <sequence type="described" ref="VSP_030515"/>
    </isoform>
    <isoform>
        <id>Q2TAZ0-4</id>
        <name>3</name>
        <sequence type="described" ref="VSP_030510 VSP_030516"/>
    </isoform>
    <isoform>
        <id>Q2TAZ0-5</id>
        <name>4</name>
        <sequence type="described" ref="VSP_030511 VSP_030512"/>
    </isoform>
</comment>
<comment type="domain">
    <text evidence="10">The chorein N-terminal domain mediates lipid transfer activity.</text>
</comment>
<comment type="similarity">
    <text evidence="21">Belongs to the ATG2 family.</text>
</comment>
<comment type="sequence caution" evidence="21">
    <conflict type="erroneous initiation">
        <sequence resource="EMBL-CDS" id="BAA23700"/>
    </conflict>
    <text>Extended N-terminus.</text>
</comment>
<accession>Q2TAZ0</accession>
<accession>O43154</accession>
<accession>Q14DM2</accession>
<accession>Q6ZTV2</accession>
<accession>Q7Z6K8</accession>
<accession>Q8IVY5</accession>
<accession>Q8TAI8</accession>
<accession>Q96HH7</accession>